<comment type="similarity">
    <text evidence="3">Belongs to the protease inhibitor I3 (leguminous Kunitz-type inhibitor) family.</text>
</comment>
<reference key="1">
    <citation type="journal article" date="1991" name="Plant Mol. Biol.">
        <title>Nucleic acid sequence of a 21 kDa cocoa seed protein with homology to the soybean trypsin inhibitor (Kunitz) family of protease inhibitors.</title>
        <authorList>
            <person name="Tai H."/>
            <person name="McHenry L."/>
            <person name="Fritz P.J."/>
            <person name="Furtek D.B."/>
        </authorList>
    </citation>
    <scope>NUCLEOTIDE SEQUENCE [MRNA]</scope>
    <source>
        <tissue>Seed</tissue>
    </source>
</reference>
<accession>P32765</accession>
<evidence type="ECO:0000250" key="1"/>
<evidence type="ECO:0000255" key="2"/>
<evidence type="ECO:0000305" key="3"/>
<dbReference type="EMBL" id="X56509">
    <property type="protein sequence ID" value="CAA39860.1"/>
    <property type="molecule type" value="mRNA"/>
</dbReference>
<dbReference type="RefSeq" id="XP_007036743.1">
    <property type="nucleotide sequence ID" value="XM_007036681.2"/>
</dbReference>
<dbReference type="SMR" id="P32765"/>
<dbReference type="MEROPS" id="I03.030"/>
<dbReference type="EnsemblPlants" id="EOY21244">
    <property type="protein sequence ID" value="EOY21244"/>
    <property type="gene ID" value="TCM_012658"/>
</dbReference>
<dbReference type="GeneID" id="18604292"/>
<dbReference type="Gramene" id="EOY21244">
    <property type="protein sequence ID" value="EOY21244"/>
    <property type="gene ID" value="TCM_012658"/>
</dbReference>
<dbReference type="KEGG" id="tcc:18604292"/>
<dbReference type="eggNOG" id="ENOG502QWSQ">
    <property type="taxonomic scope" value="Eukaryota"/>
</dbReference>
<dbReference type="HOGENOM" id="CLU_090145_1_0_1"/>
<dbReference type="OMA" id="GNGWPFI"/>
<dbReference type="OrthoDB" id="949174at2759"/>
<dbReference type="Proteomes" id="UP000694886">
    <property type="component" value="Unplaced"/>
</dbReference>
<dbReference type="GO" id="GO:0004866">
    <property type="term" value="F:endopeptidase inhibitor activity"/>
    <property type="evidence" value="ECO:0007669"/>
    <property type="project" value="InterPro"/>
</dbReference>
<dbReference type="CDD" id="cd23370">
    <property type="entry name" value="beta-trefoil_STI_MkMLP-like"/>
    <property type="match status" value="1"/>
</dbReference>
<dbReference type="Gene3D" id="2.80.10.50">
    <property type="match status" value="1"/>
</dbReference>
<dbReference type="InterPro" id="IPR011065">
    <property type="entry name" value="Kunitz_inhibitor_STI-like_sf"/>
</dbReference>
<dbReference type="InterPro" id="IPR002160">
    <property type="entry name" value="Prot_inh_Kunz-lg"/>
</dbReference>
<dbReference type="PANTHER" id="PTHR33107:SF28">
    <property type="entry name" value="CYSTEINE PROTEASE INHIBITOR 8-LIKE"/>
    <property type="match status" value="1"/>
</dbReference>
<dbReference type="PANTHER" id="PTHR33107">
    <property type="entry name" value="KUNITZ TRYPSIN INHIBITOR 2"/>
    <property type="match status" value="1"/>
</dbReference>
<dbReference type="Pfam" id="PF00197">
    <property type="entry name" value="Kunitz_legume"/>
    <property type="match status" value="1"/>
</dbReference>
<dbReference type="PRINTS" id="PR00291">
    <property type="entry name" value="KUNITZINHBTR"/>
</dbReference>
<dbReference type="SMART" id="SM00452">
    <property type="entry name" value="STI"/>
    <property type="match status" value="1"/>
</dbReference>
<dbReference type="SUPFAM" id="SSF50386">
    <property type="entry name" value="STI-like"/>
    <property type="match status" value="1"/>
</dbReference>
<dbReference type="PROSITE" id="PS00283">
    <property type="entry name" value="SOYBEAN_KUNITZ"/>
    <property type="match status" value="1"/>
</dbReference>
<name>ASP_THECC</name>
<feature type="signal peptide" evidence="2">
    <location>
        <begin position="1"/>
        <end position="26"/>
    </location>
</feature>
<feature type="chain" id="PRO_0000016932" description="21 kDa seed protein">
    <location>
        <begin position="27"/>
        <end position="221"/>
    </location>
</feature>
<feature type="disulfide bond" evidence="1">
    <location>
        <begin position="69"/>
        <end position="116"/>
    </location>
</feature>
<keyword id="KW-1015">Disulfide bond</keyword>
<keyword id="KW-0732">Signal</keyword>
<organism>
    <name type="scientific">Theobroma cacao</name>
    <name type="common">Cacao</name>
    <name type="synonym">Cocoa</name>
    <dbReference type="NCBI Taxonomy" id="3641"/>
    <lineage>
        <taxon>Eukaryota</taxon>
        <taxon>Viridiplantae</taxon>
        <taxon>Streptophyta</taxon>
        <taxon>Embryophyta</taxon>
        <taxon>Tracheophyta</taxon>
        <taxon>Spermatophyta</taxon>
        <taxon>Magnoliopsida</taxon>
        <taxon>eudicotyledons</taxon>
        <taxon>Gunneridae</taxon>
        <taxon>Pentapetalae</taxon>
        <taxon>rosids</taxon>
        <taxon>malvids</taxon>
        <taxon>Malvales</taxon>
        <taxon>Malvaceae</taxon>
        <taxon>Byttnerioideae</taxon>
        <taxon>Theobroma</taxon>
    </lineage>
</organism>
<proteinExistence type="evidence at transcript level"/>
<sequence length="221" mass="24039">MKTATAVVLLLFAFTSKSYFFGVANAANSPVLDTDGDELQTGVQYYVLSSISGAGGGGLALGRATGQSCPEIVVQRRSDLDNGTPVIFSNADSKDDVVRVSTDVNIEFVPIRDRLCSTSTVWRLDNYDNSAGKWWVTTDGVKGEPGPNTLCSWFKIEKAGVLGYKFRFCPSVCDSCTTLCSDIGRHSDDDGQIRLALSDNEWAWMFKKASKTIKQVVNAKH</sequence>
<gene>
    <name type="primary">ASP</name>
</gene>
<protein>
    <recommendedName>
        <fullName>21 kDa seed protein</fullName>
    </recommendedName>
</protein>